<evidence type="ECO:0000255" key="1">
    <source>
        <dbReference type="HAMAP-Rule" id="MF_00107"/>
    </source>
</evidence>
<feature type="chain" id="PRO_0000237733" description="2-C-methyl-D-erythritol 2,4-cyclodiphosphate synthase">
    <location>
        <begin position="1"/>
        <end position="163"/>
    </location>
</feature>
<feature type="binding site" evidence="1">
    <location>
        <begin position="8"/>
        <end position="10"/>
    </location>
    <ligand>
        <name>4-CDP-2-C-methyl-D-erythritol 2-phosphate</name>
        <dbReference type="ChEBI" id="CHEBI:57919"/>
    </ligand>
</feature>
<feature type="binding site" evidence="1">
    <location>
        <position position="8"/>
    </location>
    <ligand>
        <name>a divalent metal cation</name>
        <dbReference type="ChEBI" id="CHEBI:60240"/>
    </ligand>
</feature>
<feature type="binding site" evidence="1">
    <location>
        <position position="10"/>
    </location>
    <ligand>
        <name>a divalent metal cation</name>
        <dbReference type="ChEBI" id="CHEBI:60240"/>
    </ligand>
</feature>
<feature type="binding site" evidence="1">
    <location>
        <begin position="34"/>
        <end position="35"/>
    </location>
    <ligand>
        <name>4-CDP-2-C-methyl-D-erythritol 2-phosphate</name>
        <dbReference type="ChEBI" id="CHEBI:57919"/>
    </ligand>
</feature>
<feature type="binding site" evidence="1">
    <location>
        <position position="42"/>
    </location>
    <ligand>
        <name>a divalent metal cation</name>
        <dbReference type="ChEBI" id="CHEBI:60240"/>
    </ligand>
</feature>
<feature type="binding site" evidence="1">
    <location>
        <begin position="56"/>
        <end position="58"/>
    </location>
    <ligand>
        <name>4-CDP-2-C-methyl-D-erythritol 2-phosphate</name>
        <dbReference type="ChEBI" id="CHEBI:57919"/>
    </ligand>
</feature>
<feature type="binding site" evidence="1">
    <location>
        <begin position="132"/>
        <end position="135"/>
    </location>
    <ligand>
        <name>4-CDP-2-C-methyl-D-erythritol 2-phosphate</name>
        <dbReference type="ChEBI" id="CHEBI:57919"/>
    </ligand>
</feature>
<feature type="binding site" evidence="1">
    <location>
        <position position="139"/>
    </location>
    <ligand>
        <name>4-CDP-2-C-methyl-D-erythritol 2-phosphate</name>
        <dbReference type="ChEBI" id="CHEBI:57919"/>
    </ligand>
</feature>
<feature type="binding site" evidence="1">
    <location>
        <position position="142"/>
    </location>
    <ligand>
        <name>4-CDP-2-C-methyl-D-erythritol 2-phosphate</name>
        <dbReference type="ChEBI" id="CHEBI:57919"/>
    </ligand>
</feature>
<feature type="site" description="Transition state stabilizer" evidence="1">
    <location>
        <position position="34"/>
    </location>
</feature>
<feature type="site" description="Transition state stabilizer" evidence="1">
    <location>
        <position position="133"/>
    </location>
</feature>
<reference key="1">
    <citation type="journal article" date="2008" name="Environ. Microbiol.">
        <title>The complete genome sequence of Moorella thermoacetica (f. Clostridium thermoaceticum).</title>
        <authorList>
            <person name="Pierce E."/>
            <person name="Xie G."/>
            <person name="Barabote R.D."/>
            <person name="Saunders E."/>
            <person name="Han C.S."/>
            <person name="Detter J.C."/>
            <person name="Richardson P."/>
            <person name="Brettin T.S."/>
            <person name="Das A."/>
            <person name="Ljungdahl L.G."/>
            <person name="Ragsdale S.W."/>
        </authorList>
    </citation>
    <scope>NUCLEOTIDE SEQUENCE [LARGE SCALE GENOMIC DNA]</scope>
    <source>
        <strain>ATCC 39073 / JCM 9320</strain>
    </source>
</reference>
<dbReference type="EC" id="4.6.1.12" evidence="1"/>
<dbReference type="EMBL" id="CP000232">
    <property type="protein sequence ID" value="ABC20768.1"/>
    <property type="molecule type" value="Genomic_DNA"/>
</dbReference>
<dbReference type="RefSeq" id="YP_431311.1">
    <property type="nucleotide sequence ID" value="NC_007644.1"/>
</dbReference>
<dbReference type="SMR" id="Q2RFM1"/>
<dbReference type="STRING" id="264732.Moth_2486"/>
<dbReference type="EnsemblBacteria" id="ABC20768">
    <property type="protein sequence ID" value="ABC20768"/>
    <property type="gene ID" value="Moth_2486"/>
</dbReference>
<dbReference type="KEGG" id="mta:Moth_2486"/>
<dbReference type="PATRIC" id="fig|264732.11.peg.2706"/>
<dbReference type="eggNOG" id="COG0245">
    <property type="taxonomic scope" value="Bacteria"/>
</dbReference>
<dbReference type="HOGENOM" id="CLU_084630_2_0_9"/>
<dbReference type="OrthoDB" id="9804336at2"/>
<dbReference type="UniPathway" id="UPA00056">
    <property type="reaction ID" value="UER00095"/>
</dbReference>
<dbReference type="GO" id="GO:0008685">
    <property type="term" value="F:2-C-methyl-D-erythritol 2,4-cyclodiphosphate synthase activity"/>
    <property type="evidence" value="ECO:0007669"/>
    <property type="project" value="UniProtKB-UniRule"/>
</dbReference>
<dbReference type="GO" id="GO:0046872">
    <property type="term" value="F:metal ion binding"/>
    <property type="evidence" value="ECO:0007669"/>
    <property type="project" value="UniProtKB-KW"/>
</dbReference>
<dbReference type="GO" id="GO:0019288">
    <property type="term" value="P:isopentenyl diphosphate biosynthetic process, methylerythritol 4-phosphate pathway"/>
    <property type="evidence" value="ECO:0007669"/>
    <property type="project" value="UniProtKB-UniRule"/>
</dbReference>
<dbReference type="GO" id="GO:0016114">
    <property type="term" value="P:terpenoid biosynthetic process"/>
    <property type="evidence" value="ECO:0007669"/>
    <property type="project" value="InterPro"/>
</dbReference>
<dbReference type="CDD" id="cd00554">
    <property type="entry name" value="MECDP_synthase"/>
    <property type="match status" value="1"/>
</dbReference>
<dbReference type="FunFam" id="3.30.1330.50:FF:000001">
    <property type="entry name" value="2-C-methyl-D-erythritol 2,4-cyclodiphosphate synthase"/>
    <property type="match status" value="1"/>
</dbReference>
<dbReference type="Gene3D" id="3.30.1330.50">
    <property type="entry name" value="2-C-methyl-D-erythritol 2,4-cyclodiphosphate synthase"/>
    <property type="match status" value="1"/>
</dbReference>
<dbReference type="HAMAP" id="MF_00107">
    <property type="entry name" value="IspF"/>
    <property type="match status" value="1"/>
</dbReference>
<dbReference type="InterPro" id="IPR003526">
    <property type="entry name" value="MECDP_synthase"/>
</dbReference>
<dbReference type="InterPro" id="IPR020555">
    <property type="entry name" value="MECDP_synthase_CS"/>
</dbReference>
<dbReference type="InterPro" id="IPR036571">
    <property type="entry name" value="MECDP_synthase_sf"/>
</dbReference>
<dbReference type="NCBIfam" id="TIGR00151">
    <property type="entry name" value="ispF"/>
    <property type="match status" value="1"/>
</dbReference>
<dbReference type="PANTHER" id="PTHR43181">
    <property type="entry name" value="2-C-METHYL-D-ERYTHRITOL 2,4-CYCLODIPHOSPHATE SYNTHASE, CHLOROPLASTIC"/>
    <property type="match status" value="1"/>
</dbReference>
<dbReference type="PANTHER" id="PTHR43181:SF1">
    <property type="entry name" value="2-C-METHYL-D-ERYTHRITOL 2,4-CYCLODIPHOSPHATE SYNTHASE, CHLOROPLASTIC"/>
    <property type="match status" value="1"/>
</dbReference>
<dbReference type="Pfam" id="PF02542">
    <property type="entry name" value="YgbB"/>
    <property type="match status" value="1"/>
</dbReference>
<dbReference type="SUPFAM" id="SSF69765">
    <property type="entry name" value="IpsF-like"/>
    <property type="match status" value="1"/>
</dbReference>
<dbReference type="PROSITE" id="PS01350">
    <property type="entry name" value="ISPF"/>
    <property type="match status" value="1"/>
</dbReference>
<protein>
    <recommendedName>
        <fullName evidence="1">2-C-methyl-D-erythritol 2,4-cyclodiphosphate synthase</fullName>
        <shortName evidence="1">MECDP-synthase</shortName>
        <shortName evidence="1">MECPP-synthase</shortName>
        <shortName evidence="1">MECPS</shortName>
        <ecNumber evidence="1">4.6.1.12</ecNumber>
    </recommendedName>
</protein>
<comment type="function">
    <text evidence="1">Involved in the biosynthesis of isopentenyl diphosphate (IPP) and dimethylallyl diphosphate (DMAPP), two major building blocks of isoprenoid compounds. Catalyzes the conversion of 4-diphosphocytidyl-2-C-methyl-D-erythritol 2-phosphate (CDP-ME2P) to 2-C-methyl-D-erythritol 2,4-cyclodiphosphate (ME-CPP) with a corresponding release of cytidine 5-monophosphate (CMP).</text>
</comment>
<comment type="catalytic activity">
    <reaction evidence="1">
        <text>4-CDP-2-C-methyl-D-erythritol 2-phosphate = 2-C-methyl-D-erythritol 2,4-cyclic diphosphate + CMP</text>
        <dbReference type="Rhea" id="RHEA:23864"/>
        <dbReference type="ChEBI" id="CHEBI:57919"/>
        <dbReference type="ChEBI" id="CHEBI:58483"/>
        <dbReference type="ChEBI" id="CHEBI:60377"/>
        <dbReference type="EC" id="4.6.1.12"/>
    </reaction>
</comment>
<comment type="cofactor">
    <cofactor evidence="1">
        <name>a divalent metal cation</name>
        <dbReference type="ChEBI" id="CHEBI:60240"/>
    </cofactor>
    <text evidence="1">Binds 1 divalent metal cation per subunit.</text>
</comment>
<comment type="pathway">
    <text evidence="1">Isoprenoid biosynthesis; isopentenyl diphosphate biosynthesis via DXP pathway; isopentenyl diphosphate from 1-deoxy-D-xylulose 5-phosphate: step 4/6.</text>
</comment>
<comment type="subunit">
    <text evidence="1">Homotrimer.</text>
</comment>
<comment type="similarity">
    <text evidence="1">Belongs to the IspF family.</text>
</comment>
<gene>
    <name evidence="1" type="primary">ispF</name>
    <name type="ordered locus">Moth_2486</name>
</gene>
<proteinExistence type="inferred from homology"/>
<name>ISPF_MOOTA</name>
<keyword id="KW-0414">Isoprene biosynthesis</keyword>
<keyword id="KW-0456">Lyase</keyword>
<keyword id="KW-0479">Metal-binding</keyword>
<sequence length="163" mass="17210">MRIGYGYDVHGLVPGRKLVLGGVTIPYDRGLAGHSDADVLLHALADALLGAAALGDIGHYFPPGDPRYKDADSMLLLREVYRHVQTAGYRLANADATITAQEPRLAPYIDAMRERIAAALGVTKEQISVKATTTEGLGFTGRGEGISAQAVVLLLDREAGAGL</sequence>
<accession>Q2RFM1</accession>
<organism>
    <name type="scientific">Moorella thermoacetica (strain ATCC 39073 / JCM 9320)</name>
    <dbReference type="NCBI Taxonomy" id="264732"/>
    <lineage>
        <taxon>Bacteria</taxon>
        <taxon>Bacillati</taxon>
        <taxon>Bacillota</taxon>
        <taxon>Clostridia</taxon>
        <taxon>Moorellales</taxon>
        <taxon>Moorellaceae</taxon>
        <taxon>Moorella</taxon>
    </lineage>
</organism>